<evidence type="ECO:0000255" key="1">
    <source>
        <dbReference type="HAMAP-Rule" id="MF_01411"/>
    </source>
</evidence>
<evidence type="ECO:0000256" key="2">
    <source>
        <dbReference type="SAM" id="MobiDB-lite"/>
    </source>
</evidence>
<name>LPTD_CUPNH</name>
<comment type="function">
    <text evidence="1">Together with LptE, is involved in the assembly of lipopolysaccharide (LPS) at the surface of the outer membrane.</text>
</comment>
<comment type="subunit">
    <text evidence="1">Component of the lipopolysaccharide transport and assembly complex. Interacts with LptE and LptA.</text>
</comment>
<comment type="subcellular location">
    <subcellularLocation>
        <location evidence="1">Cell outer membrane</location>
    </subcellularLocation>
</comment>
<comment type="similarity">
    <text evidence="1">Belongs to the LptD family.</text>
</comment>
<proteinExistence type="inferred from homology"/>
<protein>
    <recommendedName>
        <fullName evidence="1">LPS-assembly protein LptD</fullName>
    </recommendedName>
</protein>
<sequence>MTEQRRSPNNRALPSPAPTSVPARARRAGGLHAGALRPLVLAMASLSAGAHAQMSGSAIPDLDQVEPVFEAAPKAPPLPVESGELVPRLAEPGKQSDAGSDAPTFIEADRMTGYSERGVELEGHAELRRDGGAIKGDKLTYDQDTDEAFAQGNVRMSRSGTLAVGPEARMKVEANEGYMLSPDYYFQQTGGSGKAERIDFLDKDRSTARHASYTTCSPDNADWYFSANRIDLDNDRQVGVAYGGVLNFFGVPIAAAPAFSFPLNDDRRSGFLPPLMGYGSRSGFDLTTPYYVNIAPNRDLTIYPRLMTERGLQLGGEYRYLGQGYNGRLRAEFLPDDKKTNSNRWAYSIQHNQNLAKGLNAYLNVNRVSDDQYPDDFNRSVSQSTLRQYTQEGGVTYNWQDFTFLARVQKFQTLRPSEPSYERVPQLNGKYIRYDLGGFDVQVEADYTRFRIPLTSTGFQQPQGERMFIQPSISYPIVRAGWYVTPKVTFNATQYQMEAASNTPTVQNNFSRVLPTMSLDSGMTFEREAPTVSRLFGVNYVQTLEPRLFYVYTPFRDQSQFPLFDTVQSDFGYGQIFSENPFTGYDRVADNNKLTGGLTTRLIEADTGIERFRGTIAQRYDFTGQRVQINGTLADPKAGFSDLLAATTIQMFRGYYLDAGVQYNPDSDRINYGNVAVSYRPESRKVINAGYRYRRPTSVTDNTAIDQFEVSSQWPITRRAYGIARFAFDLAASQMVDALAGVEYAADCWVGRVVYQRFRNTTQGYTGRVFLQVEFRGLSKIGSNPLNILRLNVPGYEPVSAKPVPTTQFDHYE</sequence>
<gene>
    <name evidence="1" type="primary">lptD</name>
    <name type="synonym">imp</name>
    <name type="synonym">ostA</name>
    <name type="ordered locus">H16_A0511</name>
</gene>
<reference key="1">
    <citation type="journal article" date="2006" name="Nat. Biotechnol.">
        <title>Genome sequence of the bioplastic-producing 'Knallgas' bacterium Ralstonia eutropha H16.</title>
        <authorList>
            <person name="Pohlmann A."/>
            <person name="Fricke W.F."/>
            <person name="Reinecke F."/>
            <person name="Kusian B."/>
            <person name="Liesegang H."/>
            <person name="Cramm R."/>
            <person name="Eitinger T."/>
            <person name="Ewering C."/>
            <person name="Poetter M."/>
            <person name="Schwartz E."/>
            <person name="Strittmatter A."/>
            <person name="Voss I."/>
            <person name="Gottschalk G."/>
            <person name="Steinbuechel A."/>
            <person name="Friedrich B."/>
            <person name="Bowien B."/>
        </authorList>
    </citation>
    <scope>NUCLEOTIDE SEQUENCE [LARGE SCALE GENOMIC DNA]</scope>
    <source>
        <strain>ATCC 17699 / DSM 428 / KCTC 22496 / NCIMB 10442 / H16 / Stanier 337</strain>
    </source>
</reference>
<accession>Q0KEB0</accession>
<keyword id="KW-0998">Cell outer membrane</keyword>
<keyword id="KW-0472">Membrane</keyword>
<keyword id="KW-1185">Reference proteome</keyword>
<keyword id="KW-0732">Signal</keyword>
<feature type="signal peptide" evidence="1">
    <location>
        <begin position="1"/>
        <end position="52"/>
    </location>
</feature>
<feature type="chain" id="PRO_0000281630" description="LPS-assembly protein LptD">
    <location>
        <begin position="53"/>
        <end position="813"/>
    </location>
</feature>
<feature type="region of interest" description="Disordered" evidence="2">
    <location>
        <begin position="1"/>
        <end position="29"/>
    </location>
</feature>
<organism>
    <name type="scientific">Cupriavidus necator (strain ATCC 17699 / DSM 428 / KCTC 22496 / NCIMB 10442 / H16 / Stanier 337)</name>
    <name type="common">Ralstonia eutropha</name>
    <dbReference type="NCBI Taxonomy" id="381666"/>
    <lineage>
        <taxon>Bacteria</taxon>
        <taxon>Pseudomonadati</taxon>
        <taxon>Pseudomonadota</taxon>
        <taxon>Betaproteobacteria</taxon>
        <taxon>Burkholderiales</taxon>
        <taxon>Burkholderiaceae</taxon>
        <taxon>Cupriavidus</taxon>
    </lineage>
</organism>
<dbReference type="EMBL" id="AM260479">
    <property type="protein sequence ID" value="CAJ91661.1"/>
    <property type="molecule type" value="Genomic_DNA"/>
</dbReference>
<dbReference type="RefSeq" id="WP_011614549.1">
    <property type="nucleotide sequence ID" value="NZ_CP039287.1"/>
</dbReference>
<dbReference type="SMR" id="Q0KEB0"/>
<dbReference type="STRING" id="381666.H16_A0511"/>
<dbReference type="KEGG" id="reh:H16_A0511"/>
<dbReference type="PATRIC" id="fig|381666.6.peg.877"/>
<dbReference type="eggNOG" id="COG1452">
    <property type="taxonomic scope" value="Bacteria"/>
</dbReference>
<dbReference type="HOGENOM" id="CLU_009039_0_0_4"/>
<dbReference type="OrthoDB" id="9760225at2"/>
<dbReference type="Proteomes" id="UP000008210">
    <property type="component" value="Chromosome 1"/>
</dbReference>
<dbReference type="GO" id="GO:0009279">
    <property type="term" value="C:cell outer membrane"/>
    <property type="evidence" value="ECO:0007669"/>
    <property type="project" value="UniProtKB-SubCell"/>
</dbReference>
<dbReference type="GO" id="GO:1990351">
    <property type="term" value="C:transporter complex"/>
    <property type="evidence" value="ECO:0007669"/>
    <property type="project" value="TreeGrafter"/>
</dbReference>
<dbReference type="GO" id="GO:0043165">
    <property type="term" value="P:Gram-negative-bacterium-type cell outer membrane assembly"/>
    <property type="evidence" value="ECO:0007669"/>
    <property type="project" value="UniProtKB-UniRule"/>
</dbReference>
<dbReference type="GO" id="GO:0015920">
    <property type="term" value="P:lipopolysaccharide transport"/>
    <property type="evidence" value="ECO:0007669"/>
    <property type="project" value="InterPro"/>
</dbReference>
<dbReference type="Gene3D" id="2.60.450.10">
    <property type="entry name" value="Lipopolysaccharide (LPS) transport protein A like domain"/>
    <property type="match status" value="1"/>
</dbReference>
<dbReference type="HAMAP" id="MF_01411">
    <property type="entry name" value="LPS_assembly_LptD"/>
    <property type="match status" value="1"/>
</dbReference>
<dbReference type="InterPro" id="IPR020889">
    <property type="entry name" value="LipoPS_assembly_LptD"/>
</dbReference>
<dbReference type="InterPro" id="IPR050218">
    <property type="entry name" value="LptD"/>
</dbReference>
<dbReference type="InterPro" id="IPR007543">
    <property type="entry name" value="LptD_C"/>
</dbReference>
<dbReference type="PANTHER" id="PTHR30189">
    <property type="entry name" value="LPS-ASSEMBLY PROTEIN"/>
    <property type="match status" value="1"/>
</dbReference>
<dbReference type="PANTHER" id="PTHR30189:SF1">
    <property type="entry name" value="LPS-ASSEMBLY PROTEIN LPTD"/>
    <property type="match status" value="1"/>
</dbReference>
<dbReference type="Pfam" id="PF04453">
    <property type="entry name" value="LptD"/>
    <property type="match status" value="1"/>
</dbReference>